<keyword id="KW-0031">Aminopeptidase</keyword>
<keyword id="KW-0963">Cytoplasm</keyword>
<keyword id="KW-0378">Hydrolase</keyword>
<keyword id="KW-0645">Protease</keyword>
<keyword id="KW-0720">Serine protease</keyword>
<evidence type="ECO:0000255" key="1">
    <source>
        <dbReference type="HAMAP-Rule" id="MF_00698"/>
    </source>
</evidence>
<accession>Q02W78</accession>
<feature type="chain" id="PRO_1000045483" description="Xaa-Pro dipeptidyl-peptidase">
    <location>
        <begin position="1"/>
        <end position="763"/>
    </location>
</feature>
<feature type="active site" description="Charge relay system" evidence="1">
    <location>
        <position position="348"/>
    </location>
</feature>
<feature type="active site" description="Charge relay system" evidence="1">
    <location>
        <position position="468"/>
    </location>
</feature>
<feature type="active site" description="Charge relay system" evidence="1">
    <location>
        <position position="498"/>
    </location>
</feature>
<protein>
    <recommendedName>
        <fullName evidence="1">Xaa-Pro dipeptidyl-peptidase</fullName>
        <ecNumber evidence="1">3.4.14.11</ecNumber>
    </recommendedName>
    <alternativeName>
        <fullName evidence="1">X-Pro dipeptidyl-peptidase</fullName>
    </alternativeName>
    <alternativeName>
        <fullName evidence="1">X-prolyl-dipeptidyl aminopeptidase</fullName>
        <shortName evidence="1">X-PDAP</shortName>
    </alternativeName>
</protein>
<proteinExistence type="inferred from homology"/>
<organism>
    <name type="scientific">Lactococcus lactis subsp. cremoris (strain SK11)</name>
    <dbReference type="NCBI Taxonomy" id="272622"/>
    <lineage>
        <taxon>Bacteria</taxon>
        <taxon>Bacillati</taxon>
        <taxon>Bacillota</taxon>
        <taxon>Bacilli</taxon>
        <taxon>Lactobacillales</taxon>
        <taxon>Streptococcaceae</taxon>
        <taxon>Lactococcus</taxon>
        <taxon>Lactococcus cremoris subsp. cremoris</taxon>
    </lineage>
</organism>
<dbReference type="EC" id="3.4.14.11" evidence="1"/>
<dbReference type="EMBL" id="CP000425">
    <property type="protein sequence ID" value="ABJ73794.1"/>
    <property type="molecule type" value="Genomic_DNA"/>
</dbReference>
<dbReference type="RefSeq" id="WP_011677123.1">
    <property type="nucleotide sequence ID" value="NC_008527.1"/>
</dbReference>
<dbReference type="SMR" id="Q02W78"/>
<dbReference type="ESTHER" id="lacla-pepx">
    <property type="family name" value="Lactobacillus_peptidase"/>
</dbReference>
<dbReference type="MEROPS" id="S15.001"/>
<dbReference type="KEGG" id="llc:LACR_2342"/>
<dbReference type="HOGENOM" id="CLU_011800_0_0_9"/>
<dbReference type="Proteomes" id="UP000000240">
    <property type="component" value="Chromosome"/>
</dbReference>
<dbReference type="GO" id="GO:0005737">
    <property type="term" value="C:cytoplasm"/>
    <property type="evidence" value="ECO:0007669"/>
    <property type="project" value="UniProtKB-SubCell"/>
</dbReference>
<dbReference type="GO" id="GO:0004177">
    <property type="term" value="F:aminopeptidase activity"/>
    <property type="evidence" value="ECO:0007669"/>
    <property type="project" value="UniProtKB-KW"/>
</dbReference>
<dbReference type="GO" id="GO:0008239">
    <property type="term" value="F:dipeptidyl-peptidase activity"/>
    <property type="evidence" value="ECO:0007669"/>
    <property type="project" value="UniProtKB-UniRule"/>
</dbReference>
<dbReference type="GO" id="GO:0008236">
    <property type="term" value="F:serine-type peptidase activity"/>
    <property type="evidence" value="ECO:0007669"/>
    <property type="project" value="UniProtKB-KW"/>
</dbReference>
<dbReference type="GO" id="GO:0006508">
    <property type="term" value="P:proteolysis"/>
    <property type="evidence" value="ECO:0007669"/>
    <property type="project" value="UniProtKB-KW"/>
</dbReference>
<dbReference type="Gene3D" id="1.10.246.70">
    <property type="match status" value="1"/>
</dbReference>
<dbReference type="Gene3D" id="3.40.50.1820">
    <property type="entry name" value="alpha/beta hydrolase"/>
    <property type="match status" value="1"/>
</dbReference>
<dbReference type="Gene3D" id="2.60.120.260">
    <property type="entry name" value="Galactose-binding domain-like"/>
    <property type="match status" value="1"/>
</dbReference>
<dbReference type="HAMAP" id="MF_00698">
    <property type="entry name" value="Aminopeptidase_S15"/>
    <property type="match status" value="1"/>
</dbReference>
<dbReference type="InterPro" id="IPR029058">
    <property type="entry name" value="AB_hydrolase_fold"/>
</dbReference>
<dbReference type="InterPro" id="IPR008979">
    <property type="entry name" value="Galactose-bd-like_sf"/>
</dbReference>
<dbReference type="InterPro" id="IPR008252">
    <property type="entry name" value="Pept_S15_Xpro"/>
</dbReference>
<dbReference type="InterPro" id="IPR015251">
    <property type="entry name" value="PepX_N_dom"/>
</dbReference>
<dbReference type="InterPro" id="IPR036313">
    <property type="entry name" value="PepX_N_dom_sf"/>
</dbReference>
<dbReference type="InterPro" id="IPR000383">
    <property type="entry name" value="Xaa-Pro-like_dom"/>
</dbReference>
<dbReference type="InterPro" id="IPR013736">
    <property type="entry name" value="Xaa-Pro_dipept_C"/>
</dbReference>
<dbReference type="InterPro" id="IPR050585">
    <property type="entry name" value="Xaa-Pro_dipeptidyl-ppase/CocE"/>
</dbReference>
<dbReference type="NCBIfam" id="NF003783">
    <property type="entry name" value="PRK05371.1-4"/>
    <property type="match status" value="1"/>
</dbReference>
<dbReference type="PANTHER" id="PTHR43056:SF10">
    <property type="entry name" value="COCE_NOND FAMILY, PUTATIVE (AFU_ORTHOLOGUE AFUA_7G00600)-RELATED"/>
    <property type="match status" value="1"/>
</dbReference>
<dbReference type="PANTHER" id="PTHR43056">
    <property type="entry name" value="PEPTIDASE S9 PROLYL OLIGOPEPTIDASE"/>
    <property type="match status" value="1"/>
</dbReference>
<dbReference type="Pfam" id="PF02129">
    <property type="entry name" value="Peptidase_S15"/>
    <property type="match status" value="1"/>
</dbReference>
<dbReference type="Pfam" id="PF08530">
    <property type="entry name" value="PepX_C"/>
    <property type="match status" value="1"/>
</dbReference>
<dbReference type="Pfam" id="PF09168">
    <property type="entry name" value="PepX_N"/>
    <property type="match status" value="1"/>
</dbReference>
<dbReference type="PRINTS" id="PR00923">
    <property type="entry name" value="LACTOPTASE"/>
</dbReference>
<dbReference type="SMART" id="SM00939">
    <property type="entry name" value="PepX_C"/>
    <property type="match status" value="1"/>
</dbReference>
<dbReference type="SMART" id="SM00940">
    <property type="entry name" value="PepX_N"/>
    <property type="match status" value="1"/>
</dbReference>
<dbReference type="SUPFAM" id="SSF53474">
    <property type="entry name" value="alpha/beta-Hydrolases"/>
    <property type="match status" value="1"/>
</dbReference>
<dbReference type="SUPFAM" id="SSF49785">
    <property type="entry name" value="Galactose-binding domain-like"/>
    <property type="match status" value="1"/>
</dbReference>
<dbReference type="SUPFAM" id="SSF81761">
    <property type="entry name" value="X-Prolyl dipeptidyl aminopeptidase PepX, N-terminal domain"/>
    <property type="match status" value="1"/>
</dbReference>
<sequence length="763" mass="87746">MRFNHFSIVDKNFDEQLAELDQLGFRWSVFWDEKKILKDFLIQSPSDMTDLQATAELDVIEFLKSSIELDWEIFWNIALQLLDFVPNFDFEIGKAFEYAKNSNLPQIEAEMTTENIISAFYYLLCTRRKNGMILVEHWVSEGLLPLDNHYHFFNDKSLATFDSSLLEREVLWVESPVDSEQRGENDLIKIQIIRPKSTEKLPVVMTASPYHLGINDKANDLALHDMNVELEEKASHEIHVEQKLPQKLSAKAKELPIVDKAPYRFTHGWTYSLNDYFLTRGFASIYVAGVGTRSSDGFQTSGDYQQIYSMTAVIDWLNGRARAYTSRKKTHEIKASWANGKVAMTGKSYLGTMAYGAATTGVEGLEVILAEAGISSWYNYYRENGLVRSPGGFPGEDLDVLAALTYSRNLDGADFLKGNAEYEKRLAEMTAALDRKSGDYNQFWHDRNYLINTDKVKADVLIVHGLQDWNVTPEQAYNFWKALPEGHAKHAFLHRGAHIYMNSWQSIDFSETINAYFVAKLLDRDLNLNLPPVILQENSKDQVWTMMNDFGANTQIKLPLGKTAVSFAQFDNHYDDETFKKYSKDFNVFKKDLFENKANEAVIDLELPSMLTINGPVELELRLKLNDTKGFLSAQILDFGQKKRLEDKARVKDFKVLDRGRNFMLDDLVELPLVESPYQLITKGFTNLQNQNLLTVSDLKADEWFTIKFELQPTIYHLEKADKLRVILYSTDFEHTVRDNRKVTYEIDLSQSKLIIPIESVKN</sequence>
<gene>
    <name evidence="1" type="primary">pepX</name>
    <name type="ordered locus">LACR_2342</name>
</gene>
<reference key="1">
    <citation type="journal article" date="2006" name="Proc. Natl. Acad. Sci. U.S.A.">
        <title>Comparative genomics of the lactic acid bacteria.</title>
        <authorList>
            <person name="Makarova K.S."/>
            <person name="Slesarev A."/>
            <person name="Wolf Y.I."/>
            <person name="Sorokin A."/>
            <person name="Mirkin B."/>
            <person name="Koonin E.V."/>
            <person name="Pavlov A."/>
            <person name="Pavlova N."/>
            <person name="Karamychev V."/>
            <person name="Polouchine N."/>
            <person name="Shakhova V."/>
            <person name="Grigoriev I."/>
            <person name="Lou Y."/>
            <person name="Rohksar D."/>
            <person name="Lucas S."/>
            <person name="Huang K."/>
            <person name="Goodstein D.M."/>
            <person name="Hawkins T."/>
            <person name="Plengvidhya V."/>
            <person name="Welker D."/>
            <person name="Hughes J."/>
            <person name="Goh Y."/>
            <person name="Benson A."/>
            <person name="Baldwin K."/>
            <person name="Lee J.-H."/>
            <person name="Diaz-Muniz I."/>
            <person name="Dosti B."/>
            <person name="Smeianov V."/>
            <person name="Wechter W."/>
            <person name="Barabote R."/>
            <person name="Lorca G."/>
            <person name="Altermann E."/>
            <person name="Barrangou R."/>
            <person name="Ganesan B."/>
            <person name="Xie Y."/>
            <person name="Rawsthorne H."/>
            <person name="Tamir D."/>
            <person name="Parker C."/>
            <person name="Breidt F."/>
            <person name="Broadbent J.R."/>
            <person name="Hutkins R."/>
            <person name="O'Sullivan D."/>
            <person name="Steele J."/>
            <person name="Unlu G."/>
            <person name="Saier M.H. Jr."/>
            <person name="Klaenhammer T."/>
            <person name="Richardson P."/>
            <person name="Kozyavkin S."/>
            <person name="Weimer B.C."/>
            <person name="Mills D.A."/>
        </authorList>
    </citation>
    <scope>NUCLEOTIDE SEQUENCE [LARGE SCALE GENOMIC DNA]</scope>
    <source>
        <strain>SK11</strain>
    </source>
</reference>
<comment type="function">
    <text evidence="1">Removes N-terminal dipeptides sequentially from polypeptides having unsubstituted N-termini provided that the penultimate residue is proline.</text>
</comment>
<comment type="catalytic activity">
    <reaction evidence="1">
        <text>Hydrolyzes Xaa-Pro-|- bonds to release unblocked, N-terminal dipeptides from substrates including Ala-Pro-|-p-nitroanilide and (sequentially) Tyr-Pro-|-Phe-Pro-|-Gly-Pro-|-Ile.</text>
        <dbReference type="EC" id="3.4.14.11"/>
    </reaction>
</comment>
<comment type="subunit">
    <text evidence="1">Homodimer.</text>
</comment>
<comment type="subcellular location">
    <subcellularLocation>
        <location evidence="1">Cytoplasm</location>
    </subcellularLocation>
</comment>
<comment type="similarity">
    <text evidence="1">Belongs to the peptidase S15 family.</text>
</comment>
<name>PEPX_LACLS</name>